<dbReference type="EMBL" id="L77246">
    <property type="protein sequence ID" value="AAA96640.1"/>
    <property type="molecule type" value="Genomic_DNA"/>
</dbReference>
<dbReference type="EMBL" id="AL009126">
    <property type="protein sequence ID" value="CAB14094.1"/>
    <property type="molecule type" value="Genomic_DNA"/>
</dbReference>
<dbReference type="PIR" id="G69938">
    <property type="entry name" value="G69938"/>
</dbReference>
<dbReference type="RefSeq" id="NP_390059.1">
    <property type="nucleotide sequence ID" value="NC_000964.3"/>
</dbReference>
<dbReference type="RefSeq" id="WP_004399020.1">
    <property type="nucleotide sequence ID" value="NZ_OZ025638.1"/>
</dbReference>
<dbReference type="SMR" id="P54177"/>
<dbReference type="FunCoup" id="P54177">
    <property type="interactions" value="6"/>
</dbReference>
<dbReference type="STRING" id="224308.BSU21760"/>
<dbReference type="PaxDb" id="224308-BSU21760"/>
<dbReference type="DNASU" id="939096"/>
<dbReference type="EnsemblBacteria" id="CAB14094">
    <property type="protein sequence ID" value="CAB14094"/>
    <property type="gene ID" value="BSU_21760"/>
</dbReference>
<dbReference type="GeneID" id="939096"/>
<dbReference type="KEGG" id="bsu:BSU21760"/>
<dbReference type="PATRIC" id="fig|224308.179.peg.2378"/>
<dbReference type="eggNOG" id="ENOG5032XH4">
    <property type="taxonomic scope" value="Bacteria"/>
</dbReference>
<dbReference type="InParanoid" id="P54177"/>
<dbReference type="OrthoDB" id="2941639at2"/>
<dbReference type="BioCyc" id="BSUB:BSU21760-MONOMER"/>
<dbReference type="Proteomes" id="UP000001570">
    <property type="component" value="Chromosome"/>
</dbReference>
<dbReference type="InterPro" id="IPR019687">
    <property type="entry name" value="DUF2535"/>
</dbReference>
<dbReference type="Pfam" id="PF10751">
    <property type="entry name" value="DUF2535"/>
    <property type="match status" value="1"/>
</dbReference>
<protein>
    <recommendedName>
        <fullName>Uncharacterized protein YpmP</fullName>
    </recommendedName>
</protein>
<gene>
    <name type="primary">ypmP</name>
    <name type="ordered locus">BSU21760</name>
</gene>
<reference key="1">
    <citation type="journal article" date="1996" name="Microbiology">
        <title>Organization of the Bacillus subtilis 168 chromosome between kdg and the attachment site of the SP beta prophage: use of long accurate PCR and yeast artificial chromosomes for sequencing.</title>
        <authorList>
            <person name="Capuano V."/>
            <person name="Galleron N."/>
            <person name="Pujic P."/>
            <person name="Sorokin A."/>
            <person name="Ehrlich S.D."/>
        </authorList>
    </citation>
    <scope>NUCLEOTIDE SEQUENCE [GENOMIC DNA]</scope>
    <source>
        <strain>168 / Marburg / ATCC 6051 / DSM 10 / JCM 1465 / NBRC 13719 / NCIMB 3610 / NRRL NRS-744 / VKM B-501</strain>
    </source>
</reference>
<reference key="2">
    <citation type="journal article" date="1997" name="Nature">
        <title>The complete genome sequence of the Gram-positive bacterium Bacillus subtilis.</title>
        <authorList>
            <person name="Kunst F."/>
            <person name="Ogasawara N."/>
            <person name="Moszer I."/>
            <person name="Albertini A.M."/>
            <person name="Alloni G."/>
            <person name="Azevedo V."/>
            <person name="Bertero M.G."/>
            <person name="Bessieres P."/>
            <person name="Bolotin A."/>
            <person name="Borchert S."/>
            <person name="Borriss R."/>
            <person name="Boursier L."/>
            <person name="Brans A."/>
            <person name="Braun M."/>
            <person name="Brignell S.C."/>
            <person name="Bron S."/>
            <person name="Brouillet S."/>
            <person name="Bruschi C.V."/>
            <person name="Caldwell B."/>
            <person name="Capuano V."/>
            <person name="Carter N.M."/>
            <person name="Choi S.-K."/>
            <person name="Codani J.-J."/>
            <person name="Connerton I.F."/>
            <person name="Cummings N.J."/>
            <person name="Daniel R.A."/>
            <person name="Denizot F."/>
            <person name="Devine K.M."/>
            <person name="Duesterhoeft A."/>
            <person name="Ehrlich S.D."/>
            <person name="Emmerson P.T."/>
            <person name="Entian K.-D."/>
            <person name="Errington J."/>
            <person name="Fabret C."/>
            <person name="Ferrari E."/>
            <person name="Foulger D."/>
            <person name="Fritz C."/>
            <person name="Fujita M."/>
            <person name="Fujita Y."/>
            <person name="Fuma S."/>
            <person name="Galizzi A."/>
            <person name="Galleron N."/>
            <person name="Ghim S.-Y."/>
            <person name="Glaser P."/>
            <person name="Goffeau A."/>
            <person name="Golightly E.J."/>
            <person name="Grandi G."/>
            <person name="Guiseppi G."/>
            <person name="Guy B.J."/>
            <person name="Haga K."/>
            <person name="Haiech J."/>
            <person name="Harwood C.R."/>
            <person name="Henaut A."/>
            <person name="Hilbert H."/>
            <person name="Holsappel S."/>
            <person name="Hosono S."/>
            <person name="Hullo M.-F."/>
            <person name="Itaya M."/>
            <person name="Jones L.-M."/>
            <person name="Joris B."/>
            <person name="Karamata D."/>
            <person name="Kasahara Y."/>
            <person name="Klaerr-Blanchard M."/>
            <person name="Klein C."/>
            <person name="Kobayashi Y."/>
            <person name="Koetter P."/>
            <person name="Koningstein G."/>
            <person name="Krogh S."/>
            <person name="Kumano M."/>
            <person name="Kurita K."/>
            <person name="Lapidus A."/>
            <person name="Lardinois S."/>
            <person name="Lauber J."/>
            <person name="Lazarevic V."/>
            <person name="Lee S.-M."/>
            <person name="Levine A."/>
            <person name="Liu H."/>
            <person name="Masuda S."/>
            <person name="Mauel C."/>
            <person name="Medigue C."/>
            <person name="Medina N."/>
            <person name="Mellado R.P."/>
            <person name="Mizuno M."/>
            <person name="Moestl D."/>
            <person name="Nakai S."/>
            <person name="Noback M."/>
            <person name="Noone D."/>
            <person name="O'Reilly M."/>
            <person name="Ogawa K."/>
            <person name="Ogiwara A."/>
            <person name="Oudega B."/>
            <person name="Park S.-H."/>
            <person name="Parro V."/>
            <person name="Pohl T.M."/>
            <person name="Portetelle D."/>
            <person name="Porwollik S."/>
            <person name="Prescott A.M."/>
            <person name="Presecan E."/>
            <person name="Pujic P."/>
            <person name="Purnelle B."/>
            <person name="Rapoport G."/>
            <person name="Rey M."/>
            <person name="Reynolds S."/>
            <person name="Rieger M."/>
            <person name="Rivolta C."/>
            <person name="Rocha E."/>
            <person name="Roche B."/>
            <person name="Rose M."/>
            <person name="Sadaie Y."/>
            <person name="Sato T."/>
            <person name="Scanlan E."/>
            <person name="Schleich S."/>
            <person name="Schroeter R."/>
            <person name="Scoffone F."/>
            <person name="Sekiguchi J."/>
            <person name="Sekowska A."/>
            <person name="Seror S.J."/>
            <person name="Serror P."/>
            <person name="Shin B.-S."/>
            <person name="Soldo B."/>
            <person name="Sorokin A."/>
            <person name="Tacconi E."/>
            <person name="Takagi T."/>
            <person name="Takahashi H."/>
            <person name="Takemaru K."/>
            <person name="Takeuchi M."/>
            <person name="Tamakoshi A."/>
            <person name="Tanaka T."/>
            <person name="Terpstra P."/>
            <person name="Tognoni A."/>
            <person name="Tosato V."/>
            <person name="Uchiyama S."/>
            <person name="Vandenbol M."/>
            <person name="Vannier F."/>
            <person name="Vassarotti A."/>
            <person name="Viari A."/>
            <person name="Wambutt R."/>
            <person name="Wedler E."/>
            <person name="Wedler H."/>
            <person name="Weitzenegger T."/>
            <person name="Winters P."/>
            <person name="Wipat A."/>
            <person name="Yamamoto H."/>
            <person name="Yamane K."/>
            <person name="Yasumoto K."/>
            <person name="Yata K."/>
            <person name="Yoshida K."/>
            <person name="Yoshikawa H.-F."/>
            <person name="Zumstein E."/>
            <person name="Yoshikawa H."/>
            <person name="Danchin A."/>
        </authorList>
    </citation>
    <scope>NUCLEOTIDE SEQUENCE [LARGE SCALE GENOMIC DNA]</scope>
    <source>
        <strain>168</strain>
    </source>
</reference>
<keyword id="KW-1185">Reference proteome</keyword>
<organism>
    <name type="scientific">Bacillus subtilis (strain 168)</name>
    <dbReference type="NCBI Taxonomy" id="224308"/>
    <lineage>
        <taxon>Bacteria</taxon>
        <taxon>Bacillati</taxon>
        <taxon>Bacillota</taxon>
        <taxon>Bacilli</taxon>
        <taxon>Bacillales</taxon>
        <taxon>Bacillaceae</taxon>
        <taxon>Bacillus</taxon>
    </lineage>
</organism>
<sequence length="83" mass="10188">MLLKSLEFKRGDGIQVKVTEIPVLKEDEHYFFMLHHHLQFYLKEVFSSNSRAKVYSFRHYMKRRMKWADYQAVFHQEVLKHNA</sequence>
<accession>P54177</accession>
<name>YPMP_BACSU</name>
<feature type="chain" id="PRO_0000049711" description="Uncharacterized protein YpmP">
    <location>
        <begin position="1"/>
        <end position="83"/>
    </location>
</feature>
<proteinExistence type="predicted"/>